<organism>
    <name type="scientific">Escherichia coli (strain K12)</name>
    <dbReference type="NCBI Taxonomy" id="83333"/>
    <lineage>
        <taxon>Bacteria</taxon>
        <taxon>Pseudomonadati</taxon>
        <taxon>Pseudomonadota</taxon>
        <taxon>Gammaproteobacteria</taxon>
        <taxon>Enterobacterales</taxon>
        <taxon>Enterobacteriaceae</taxon>
        <taxon>Escherichia</taxon>
    </lineage>
</organism>
<name>FABB_ECOLI</name>
<sequence>MKRAVITGLGIVSSIGNNQQEVLASLREGRSGITFSQELKDSGMRSHVWGNVKLDTTGLIDRKVVRFMSDASIYAFLSMEQAIADAGLSPEAYQNNPRVGLIAGSGGGSPRFQVFGADAMRGPRGLKAVGPYVVTKAMASGVSACLATPFKIHGVNYSISSACATSAHCIGNAVEQIQLGKQDIVFAGGGEELCWEMACEFDAMGALSTKYNDTPEKASRTYDAHRDGFVIAGGGGMVVVEELEHALARGAHIYAEIVGYGATSDGADMVAPSGEGAVRCMKMAMHGVDTPIDYLNSHGTSTPVGDVKELAAIREVFGDKSPAISATKAMTGHSLGAAGVQEAIYSLLMLEHGFIAPSINIEELDEQAAGLNIVTETTDRELTTVMSNSFGFGGTNATLVMRKLKD</sequence>
<comment type="function">
    <text evidence="4 6 7 8 9">Involved in the type II fatty acid elongation cycle. Catalyzes the elongation of a wide range of acyl-ACP by the addition of two carbons from malonyl-ACP to an acyl acceptor (PubMed:19679654, PubMed:22017312, PubMed:8910376, PubMed:9013860). Can also use unsaturated fatty acids (PubMed:19679654, PubMed:3076377, PubMed:8910376). Catalyzes a key reaction in unsaturated fatty acid (UFA) synthesis, the elongation of the cis-3-decenoyl-ACP produced by FabA (PubMed:19679654). Can use acyl chains from C-6 to C-14 (PubMed:19679654, PubMed:22017312, PubMed:8910376, PubMed:9013860). Has an absolute requirement for an ACP substrate as the acyl donor, and no activity is detected when both substrates are based on CoA (PubMed:22017312).</text>
</comment>
<comment type="catalytic activity">
    <reaction evidence="4 6 8 9">
        <text>a fatty acyl-[ACP] + malonyl-[ACP] + H(+) = a 3-oxoacyl-[ACP] + holo-[ACP] + CO2</text>
        <dbReference type="Rhea" id="RHEA:22836"/>
        <dbReference type="Rhea" id="RHEA-COMP:9623"/>
        <dbReference type="Rhea" id="RHEA-COMP:9685"/>
        <dbReference type="Rhea" id="RHEA-COMP:9916"/>
        <dbReference type="Rhea" id="RHEA-COMP:14125"/>
        <dbReference type="ChEBI" id="CHEBI:15378"/>
        <dbReference type="ChEBI" id="CHEBI:16526"/>
        <dbReference type="ChEBI" id="CHEBI:64479"/>
        <dbReference type="ChEBI" id="CHEBI:78449"/>
        <dbReference type="ChEBI" id="CHEBI:78776"/>
        <dbReference type="ChEBI" id="CHEBI:138651"/>
        <dbReference type="EC" id="2.3.1.41"/>
    </reaction>
    <physiologicalReaction direction="left-to-right" evidence="4 6 8 9">
        <dbReference type="Rhea" id="RHEA:22837"/>
    </physiologicalReaction>
</comment>
<comment type="catalytic activity">
    <reaction evidence="4">
        <text>(3Z)-decenoyl-[ACP] + malonyl-[ACP] + H(+) = 3-oxo-(5Z)-dodecenoyl-[ACP] + holo-[ACP] + CO2</text>
        <dbReference type="Rhea" id="RHEA:54940"/>
        <dbReference type="Rhea" id="RHEA-COMP:9623"/>
        <dbReference type="Rhea" id="RHEA-COMP:9685"/>
        <dbReference type="Rhea" id="RHEA-COMP:9927"/>
        <dbReference type="Rhea" id="RHEA-COMP:14042"/>
        <dbReference type="ChEBI" id="CHEBI:15378"/>
        <dbReference type="ChEBI" id="CHEBI:16526"/>
        <dbReference type="ChEBI" id="CHEBI:64479"/>
        <dbReference type="ChEBI" id="CHEBI:78449"/>
        <dbReference type="ChEBI" id="CHEBI:78798"/>
        <dbReference type="ChEBI" id="CHEBI:138410"/>
    </reaction>
    <physiologicalReaction direction="left-to-right" evidence="4">
        <dbReference type="Rhea" id="RHEA:54941"/>
    </physiologicalReaction>
</comment>
<comment type="catalytic activity">
    <reaction evidence="9">
        <text>hexanoyl-[ACP] + malonyl-[ACP] + H(+) = 3-oxooctanoyl-[ACP] + holo-[ACP] + CO2</text>
        <dbReference type="Rhea" id="RHEA:41836"/>
        <dbReference type="Rhea" id="RHEA-COMP:9623"/>
        <dbReference type="Rhea" id="RHEA-COMP:9632"/>
        <dbReference type="Rhea" id="RHEA-COMP:9633"/>
        <dbReference type="Rhea" id="RHEA-COMP:9685"/>
        <dbReference type="ChEBI" id="CHEBI:15378"/>
        <dbReference type="ChEBI" id="CHEBI:16526"/>
        <dbReference type="ChEBI" id="CHEBI:64479"/>
        <dbReference type="ChEBI" id="CHEBI:78449"/>
        <dbReference type="ChEBI" id="CHEBI:78459"/>
        <dbReference type="ChEBI" id="CHEBI:78460"/>
    </reaction>
    <physiologicalReaction direction="left-to-right" evidence="9">
        <dbReference type="Rhea" id="RHEA:41837"/>
    </physiologicalReaction>
</comment>
<comment type="catalytic activity">
    <reaction evidence="9">
        <text>octanoyl-[ACP] + malonyl-[ACP] + H(+) = 3-oxodecanoyl-[ACP] + holo-[ACP] + CO2</text>
        <dbReference type="Rhea" id="RHEA:41852"/>
        <dbReference type="Rhea" id="RHEA-COMP:9623"/>
        <dbReference type="Rhea" id="RHEA-COMP:9636"/>
        <dbReference type="Rhea" id="RHEA-COMP:9637"/>
        <dbReference type="Rhea" id="RHEA-COMP:9685"/>
        <dbReference type="ChEBI" id="CHEBI:15378"/>
        <dbReference type="ChEBI" id="CHEBI:16526"/>
        <dbReference type="ChEBI" id="CHEBI:64479"/>
        <dbReference type="ChEBI" id="CHEBI:78449"/>
        <dbReference type="ChEBI" id="CHEBI:78463"/>
        <dbReference type="ChEBI" id="CHEBI:78464"/>
    </reaction>
    <physiologicalReaction direction="left-to-right" evidence="9">
        <dbReference type="Rhea" id="RHEA:41853"/>
    </physiologicalReaction>
</comment>
<comment type="catalytic activity">
    <reaction evidence="9">
        <text>decanoyl-[ACP] + malonyl-[ACP] + H(+) = 3-oxododecanoyl-[ACP] + holo-[ACP] + CO2</text>
        <dbReference type="Rhea" id="RHEA:41868"/>
        <dbReference type="Rhea" id="RHEA-COMP:9623"/>
        <dbReference type="Rhea" id="RHEA-COMP:9640"/>
        <dbReference type="Rhea" id="RHEA-COMP:9641"/>
        <dbReference type="Rhea" id="RHEA-COMP:9685"/>
        <dbReference type="ChEBI" id="CHEBI:15378"/>
        <dbReference type="ChEBI" id="CHEBI:16526"/>
        <dbReference type="ChEBI" id="CHEBI:64479"/>
        <dbReference type="ChEBI" id="CHEBI:78449"/>
        <dbReference type="ChEBI" id="CHEBI:78468"/>
        <dbReference type="ChEBI" id="CHEBI:78469"/>
    </reaction>
    <physiologicalReaction direction="left-to-right" evidence="9">
        <dbReference type="Rhea" id="RHEA:41869"/>
    </physiologicalReaction>
</comment>
<comment type="catalytic activity">
    <reaction evidence="6 9">
        <text>dodecanoyl-[ACP] + malonyl-[ACP] + H(+) = 3-oxotetradecanoyl-[ACP] + holo-[ACP] + CO2</text>
        <dbReference type="Rhea" id="RHEA:41884"/>
        <dbReference type="Rhea" id="RHEA-COMP:9623"/>
        <dbReference type="Rhea" id="RHEA-COMP:9644"/>
        <dbReference type="Rhea" id="RHEA-COMP:9645"/>
        <dbReference type="Rhea" id="RHEA-COMP:9685"/>
        <dbReference type="ChEBI" id="CHEBI:15378"/>
        <dbReference type="ChEBI" id="CHEBI:16526"/>
        <dbReference type="ChEBI" id="CHEBI:64479"/>
        <dbReference type="ChEBI" id="CHEBI:65264"/>
        <dbReference type="ChEBI" id="CHEBI:78449"/>
        <dbReference type="ChEBI" id="CHEBI:78473"/>
    </reaction>
    <physiologicalReaction direction="left-to-right" evidence="6 9">
        <dbReference type="Rhea" id="RHEA:41885"/>
    </physiologicalReaction>
</comment>
<comment type="catalytic activity">
    <reaction evidence="8">
        <text>tetradecanoyl-[ACP] + malonyl-[ACP] + H(+) = 3-oxohexadecanoyl-[ACP] + holo-[ACP] + CO2</text>
        <dbReference type="Rhea" id="RHEA:41900"/>
        <dbReference type="Rhea" id="RHEA-COMP:9623"/>
        <dbReference type="Rhea" id="RHEA-COMP:9648"/>
        <dbReference type="Rhea" id="RHEA-COMP:9649"/>
        <dbReference type="Rhea" id="RHEA-COMP:9685"/>
        <dbReference type="ChEBI" id="CHEBI:15378"/>
        <dbReference type="ChEBI" id="CHEBI:16526"/>
        <dbReference type="ChEBI" id="CHEBI:64479"/>
        <dbReference type="ChEBI" id="CHEBI:78449"/>
        <dbReference type="ChEBI" id="CHEBI:78477"/>
        <dbReference type="ChEBI" id="CHEBI:78478"/>
    </reaction>
    <physiologicalReaction direction="left-to-right" evidence="8">
        <dbReference type="Rhea" id="RHEA:41901"/>
    </physiologicalReaction>
</comment>
<comment type="catalytic activity">
    <reaction evidence="8">
        <text>(7Z)-tetradecenoyl-[ACP] + malonyl-[ACP] + H(+) = 3-oxo-(9Z)-hexadecenoyl-[ACP] + holo-[ACP] + CO2</text>
        <dbReference type="Rhea" id="RHEA:54924"/>
        <dbReference type="Rhea" id="RHEA-COMP:9623"/>
        <dbReference type="Rhea" id="RHEA-COMP:9685"/>
        <dbReference type="Rhea" id="RHEA-COMP:14038"/>
        <dbReference type="Rhea" id="RHEA-COMP:14039"/>
        <dbReference type="ChEBI" id="CHEBI:15378"/>
        <dbReference type="ChEBI" id="CHEBI:16526"/>
        <dbReference type="ChEBI" id="CHEBI:64479"/>
        <dbReference type="ChEBI" id="CHEBI:78449"/>
        <dbReference type="ChEBI" id="CHEBI:138405"/>
        <dbReference type="ChEBI" id="CHEBI:138406"/>
    </reaction>
    <physiologicalReaction direction="left-to-right" evidence="8">
        <dbReference type="Rhea" id="RHEA:54925"/>
    </physiologicalReaction>
</comment>
<comment type="biophysicochemical properties">
    <kinetics>
        <KM evidence="6">11.5 uM for malonyl-[ACP] (in the presence of dodecanoyl-[ACP])</KM>
        <KM evidence="6">3.2 uM for dodecanoyl-[ACP] (in the presence of malonyl-[ACP])</KM>
        <KM evidence="6">153 uM for malonyl-CoA (in the presence of dodecanoyl-[ACP])</KM>
        <KM evidence="6">58.6 uM for dodecanoyl-CoA (in the presence of malonyl-[ACP])</KM>
        <text evidence="6">kcat is 6.6 min(-1) with malonyl-[ACP] as substrate in the presence of dodecanoyl-[ACP]. kcat is 3.4 min(-1) with dodecanoyl-[ACP] in the presence of malonyl-[ACP].</text>
    </kinetics>
</comment>
<comment type="pathway">
    <text evidence="13 14">Lipid metabolism; fatty acid biosynthesis.</text>
</comment>
<comment type="subunit">
    <text evidence="2 9">Homodimer.</text>
</comment>
<comment type="subcellular location">
    <subcellularLocation>
        <location>Cytoplasm</location>
    </subcellularLocation>
</comment>
<comment type="induction">
    <text evidence="3 5">Mainly activated by FadR, but minor repression is also conferred by FabR (PubMed:11859088, PubMed:21276098).</text>
</comment>
<comment type="similarity">
    <text evidence="11">Belongs to the thiolase-like superfamily. Beta-ketoacyl-ACP synthases family.</text>
</comment>
<protein>
    <recommendedName>
        <fullName evidence="11">3-oxoacyl-[acyl-carrier-protein] synthase 1</fullName>
        <ecNumber evidence="4 6 8 9">2.3.1.41</ecNumber>
    </recommendedName>
    <alternativeName>
        <fullName evidence="11">3-oxoacyl-[acyl-carrier-protein] synthase I</fullName>
    </alternativeName>
    <alternativeName>
        <fullName evidence="10">Beta-ketoacyl-ACP synthase I</fullName>
        <shortName>KAS I</shortName>
    </alternativeName>
</protein>
<proteinExistence type="evidence at protein level"/>
<feature type="chain" id="PRO_0000180311" description="3-oxoacyl-[acyl-carrier-protein] synthase 1">
    <location>
        <begin position="1"/>
        <end position="406"/>
    </location>
</feature>
<feature type="domain" description="Ketosynthase family 3 (KS3)" evidence="1">
    <location>
        <begin position="1"/>
        <end position="403"/>
    </location>
</feature>
<feature type="active site" description="For beta-ketoacyl synthase activity" evidence="1 12">
    <location>
        <position position="163"/>
    </location>
</feature>
<feature type="active site" description="For beta-ketoacyl synthase activity" evidence="1">
    <location>
        <position position="298"/>
    </location>
</feature>
<feature type="active site" description="For beta-ketoacyl synthase activity" evidence="1">
    <location>
        <position position="333"/>
    </location>
</feature>
<feature type="sequence variant" description="In strain: MA-1 / fabB3.">
    <original>A</original>
    <variation>T</variation>
    <location>
        <position position="4"/>
    </location>
</feature>
<feature type="sequence variant" description="In strain: K1060 / fabB5.">
    <original>S</original>
    <variation>F</variation>
    <location>
        <position position="140"/>
    </location>
</feature>
<feature type="sequence variant" description="In strain: MA-1 / fabB3.">
    <original>G</original>
    <variation>S</variation>
    <location>
        <position position="299"/>
    </location>
</feature>
<feature type="sequence variant" description="In strain: M5 / fabB15.">
    <original>A</original>
    <variation>V</variation>
    <location>
        <position position="329"/>
    </location>
</feature>
<feature type="strand" evidence="19">
    <location>
        <begin position="4"/>
        <end position="13"/>
    </location>
</feature>
<feature type="strand" evidence="19">
    <location>
        <begin position="16"/>
        <end position="18"/>
    </location>
</feature>
<feature type="helix" evidence="19">
    <location>
        <begin position="19"/>
        <end position="28"/>
    </location>
</feature>
<feature type="strand" evidence="19">
    <location>
        <begin position="33"/>
        <end position="35"/>
    </location>
</feature>
<feature type="helix" evidence="19">
    <location>
        <begin position="37"/>
        <end position="41"/>
    </location>
</feature>
<feature type="strand" evidence="19">
    <location>
        <begin position="48"/>
        <end position="50"/>
    </location>
</feature>
<feature type="turn" evidence="15">
    <location>
        <begin position="57"/>
        <end position="59"/>
    </location>
</feature>
<feature type="helix" evidence="19">
    <location>
        <begin position="62"/>
        <end position="65"/>
    </location>
</feature>
<feature type="helix" evidence="19">
    <location>
        <begin position="70"/>
        <end position="86"/>
    </location>
</feature>
<feature type="helix" evidence="19">
    <location>
        <begin position="90"/>
        <end position="93"/>
    </location>
</feature>
<feature type="strand" evidence="19">
    <location>
        <begin position="99"/>
        <end position="104"/>
    </location>
</feature>
<feature type="strand" evidence="18">
    <location>
        <begin position="106"/>
        <end position="108"/>
    </location>
</feature>
<feature type="helix" evidence="19">
    <location>
        <begin position="110"/>
        <end position="120"/>
    </location>
</feature>
<feature type="turn" evidence="19">
    <location>
        <begin position="123"/>
        <end position="125"/>
    </location>
</feature>
<feature type="helix" evidence="19">
    <location>
        <begin position="126"/>
        <end position="129"/>
    </location>
</feature>
<feature type="helix" evidence="19">
    <location>
        <begin position="133"/>
        <end position="137"/>
    </location>
</feature>
<feature type="helix" evidence="19">
    <location>
        <begin position="141"/>
        <end position="147"/>
    </location>
</feature>
<feature type="turn" evidence="19">
    <location>
        <begin position="148"/>
        <end position="151"/>
    </location>
</feature>
<feature type="strand" evidence="19">
    <location>
        <begin position="156"/>
        <end position="160"/>
    </location>
</feature>
<feature type="helix" evidence="19">
    <location>
        <begin position="162"/>
        <end position="164"/>
    </location>
</feature>
<feature type="helix" evidence="19">
    <location>
        <begin position="165"/>
        <end position="178"/>
    </location>
</feature>
<feature type="strand" evidence="19">
    <location>
        <begin position="183"/>
        <end position="191"/>
    </location>
</feature>
<feature type="helix" evidence="19">
    <location>
        <begin position="195"/>
        <end position="203"/>
    </location>
</feature>
<feature type="turn" evidence="17">
    <location>
        <begin position="210"/>
        <end position="213"/>
    </location>
</feature>
<feature type="helix" evidence="19">
    <location>
        <begin position="215"/>
        <end position="217"/>
    </location>
</feature>
<feature type="strand" evidence="19">
    <location>
        <begin position="234"/>
        <end position="242"/>
    </location>
</feature>
<feature type="helix" evidence="19">
    <location>
        <begin position="243"/>
        <end position="248"/>
    </location>
</feature>
<feature type="strand" evidence="19">
    <location>
        <begin position="255"/>
        <end position="264"/>
    </location>
</feature>
<feature type="strand" evidence="18">
    <location>
        <begin position="269"/>
        <end position="271"/>
    </location>
</feature>
<feature type="helix" evidence="19">
    <location>
        <begin position="275"/>
        <end position="285"/>
    </location>
</feature>
<feature type="strand" evidence="19">
    <location>
        <begin position="294"/>
        <end position="296"/>
    </location>
</feature>
<feature type="helix" evidence="19">
    <location>
        <begin position="303"/>
        <end position="317"/>
    </location>
</feature>
<feature type="helix" evidence="16">
    <location>
        <begin position="318"/>
        <end position="320"/>
    </location>
</feature>
<feature type="strand" evidence="19">
    <location>
        <begin position="323"/>
        <end position="325"/>
    </location>
</feature>
<feature type="helix" evidence="19">
    <location>
        <begin position="328"/>
        <end position="331"/>
    </location>
</feature>
<feature type="helix" evidence="19">
    <location>
        <begin position="335"/>
        <end position="337"/>
    </location>
</feature>
<feature type="helix" evidence="19">
    <location>
        <begin position="338"/>
        <end position="352"/>
    </location>
</feature>
<feature type="strand" evidence="19">
    <location>
        <begin position="362"/>
        <end position="364"/>
    </location>
</feature>
<feature type="helix" evidence="18">
    <location>
        <begin position="366"/>
        <end position="368"/>
    </location>
</feature>
<feature type="strand" evidence="19">
    <location>
        <begin position="371"/>
        <end position="373"/>
    </location>
</feature>
<feature type="strand" evidence="19">
    <location>
        <begin position="384"/>
        <end position="391"/>
    </location>
</feature>
<feature type="turn" evidence="19">
    <location>
        <begin position="392"/>
        <end position="394"/>
    </location>
</feature>
<feature type="strand" evidence="19">
    <location>
        <begin position="395"/>
        <end position="402"/>
    </location>
</feature>
<gene>
    <name evidence="10" type="primary">fabB</name>
    <name type="synonym">fabC</name>
    <name type="ordered locus">b2323</name>
    <name type="ordered locus">JW2320</name>
</gene>
<accession>P0A953</accession>
<accession>P14926</accession>
<accession>Q9R828</accession>
<accession>Q9R829</accession>
<accession>Q9R830</accession>
<reference key="1">
    <citation type="journal article" date="1988" name="Carlsberg Res. Commun.">
        <title>Beta-ketoacyl-ACP synthase I of Escherichia coli: nucleotide sequence of the fabB gene and identification of the cerulenin binding residue.</title>
        <authorList>
            <person name="Kauppinen S."/>
            <person name="Siggaard-Andersen M."/>
            <person name="von Wettstein-Knowles P."/>
        </authorList>
    </citation>
    <scope>NUCLEOTIDE SEQUENCE [GENOMIC DNA]</scope>
    <scope>PROTEIN SEQUENCE OF 1-19 AND 158-168</scope>
    <source>
        <strain>B</strain>
    </source>
</reference>
<reference key="2">
    <citation type="submission" date="1998-10" db="EMBL/GenBank/DDBJ databases">
        <title>Catalytic residues of beta-ketoacyl-ACP synthases.</title>
        <authorList>
            <person name="Siggaard-Andersen M."/>
            <person name="von Wettstein-Knowles P."/>
            <person name="Gotthardt-Olsen J."/>
            <person name="Bangera G."/>
            <person name="Chuck J.-A."/>
            <person name="Pontoppidan B."/>
        </authorList>
    </citation>
    <scope>NUCLEOTIDE SEQUENCE [GENOMIC DNA]</scope>
    <source>
        <strain>K1060 / fabB5</strain>
        <strain>M5 / fabB15</strain>
        <strain>MA-1 / fabB3</strain>
    </source>
</reference>
<reference key="3">
    <citation type="journal article" date="1997" name="DNA Res.">
        <title>Construction of a contiguous 874-kb sequence of the Escherichia coli-K12 genome corresponding to 50.0-68.8 min on the linkage map and analysis of its sequence features.</title>
        <authorList>
            <person name="Yamamoto Y."/>
            <person name="Aiba H."/>
            <person name="Baba T."/>
            <person name="Hayashi K."/>
            <person name="Inada T."/>
            <person name="Isono K."/>
            <person name="Itoh T."/>
            <person name="Kimura S."/>
            <person name="Kitagawa M."/>
            <person name="Makino K."/>
            <person name="Miki T."/>
            <person name="Mitsuhashi N."/>
            <person name="Mizobuchi K."/>
            <person name="Mori H."/>
            <person name="Nakade S."/>
            <person name="Nakamura Y."/>
            <person name="Nashimoto H."/>
            <person name="Oshima T."/>
            <person name="Oyama S."/>
            <person name="Saito N."/>
            <person name="Sampei G."/>
            <person name="Satoh Y."/>
            <person name="Sivasundaram S."/>
            <person name="Tagami H."/>
            <person name="Takahashi H."/>
            <person name="Takeda J."/>
            <person name="Takemoto K."/>
            <person name="Uehara K."/>
            <person name="Wada C."/>
            <person name="Yamagata S."/>
            <person name="Horiuchi T."/>
        </authorList>
    </citation>
    <scope>NUCLEOTIDE SEQUENCE [LARGE SCALE GENOMIC DNA]</scope>
    <source>
        <strain>K12 / W3110 / ATCC 27325 / DSM 5911</strain>
    </source>
</reference>
<reference key="4">
    <citation type="journal article" date="1997" name="Science">
        <title>The complete genome sequence of Escherichia coli K-12.</title>
        <authorList>
            <person name="Blattner F.R."/>
            <person name="Plunkett G. III"/>
            <person name="Bloch C.A."/>
            <person name="Perna N.T."/>
            <person name="Burland V."/>
            <person name="Riley M."/>
            <person name="Collado-Vides J."/>
            <person name="Glasner J.D."/>
            <person name="Rode C.K."/>
            <person name="Mayhew G.F."/>
            <person name="Gregor J."/>
            <person name="Davis N.W."/>
            <person name="Kirkpatrick H.A."/>
            <person name="Goeden M.A."/>
            <person name="Rose D.J."/>
            <person name="Mau B."/>
            <person name="Shao Y."/>
        </authorList>
    </citation>
    <scope>NUCLEOTIDE SEQUENCE [LARGE SCALE GENOMIC DNA]</scope>
    <source>
        <strain>K12 / MG1655 / ATCC 47076</strain>
    </source>
</reference>
<reference key="5">
    <citation type="journal article" date="2006" name="Mol. Syst. Biol.">
        <title>Highly accurate genome sequences of Escherichia coli K-12 strains MG1655 and W3110.</title>
        <authorList>
            <person name="Hayashi K."/>
            <person name="Morooka N."/>
            <person name="Yamamoto Y."/>
            <person name="Fujita K."/>
            <person name="Isono K."/>
            <person name="Choi S."/>
            <person name="Ohtsubo E."/>
            <person name="Baba T."/>
            <person name="Wanner B.L."/>
            <person name="Mori H."/>
            <person name="Horiuchi T."/>
        </authorList>
    </citation>
    <scope>NUCLEOTIDE SEQUENCE [LARGE SCALE GENOMIC DNA]</scope>
    <source>
        <strain>K12 / W3110 / ATCC 27325 / DSM 5911</strain>
    </source>
</reference>
<reference key="6">
    <citation type="journal article" date="1988" name="Carlsberg Res. Commun.">
        <title>Role of Escherichia coli beta-ketoacyl-ACP synthase I in unsaturated fatty acid synthesis.</title>
        <authorList>
            <person name="Siggaard-Andersen M."/>
        </authorList>
    </citation>
    <scope>FUNCTION IN UNSATURATED FATTY ACID SYNTHESIS</scope>
</reference>
<reference key="7">
    <citation type="journal article" date="1996" name="J. Biol. Chem.">
        <title>Roles of the FabA and FabZ beta-hydroxyacyl-acyl carrier protein dehydratases in Escherichia coli fatty acid biosynthesis.</title>
        <authorList>
            <person name="Heath R.J."/>
            <person name="Rock C.O."/>
        </authorList>
    </citation>
    <scope>FUNCTION</scope>
    <scope>CATALYTIC ACTIVITY</scope>
    <scope>PATHWAY</scope>
</reference>
<reference key="8">
    <citation type="journal article" date="1997" name="FEBS Lett.">
        <title>Cloning of the fabF gene in an expression vector and in vitro characterization of recombinant fabF and fabB encoded enzymes from Escherichia coli.</title>
        <authorList>
            <person name="Edwards P."/>
            <person name="Nelsen J.S."/>
            <person name="Metz J.G."/>
            <person name="Dehesh K."/>
        </authorList>
    </citation>
    <scope>FUNCTION</scope>
    <scope>CATALYTIC ACTIVITY</scope>
    <scope>SUBUNIT</scope>
</reference>
<reference key="9">
    <citation type="journal article" date="1997" name="Electrophoresis">
        <title>Escherichia coli proteome analysis using the gene-protein database.</title>
        <authorList>
            <person name="VanBogelen R.A."/>
            <person name="Abshire K.Z."/>
            <person name="Moldover B."/>
            <person name="Olson E.R."/>
            <person name="Neidhardt F.C."/>
        </authorList>
    </citation>
    <scope>IDENTIFICATION BY 2D-GEL</scope>
</reference>
<reference key="10">
    <citation type="journal article" date="2002" name="J. Biol. Chem.">
        <title>The FabR (YijC) transcription factor regulates unsaturated fatty acid biosynthesis in Escherichia coli.</title>
        <authorList>
            <person name="Zhang Y.-M."/>
            <person name="Marrakchi H."/>
            <person name="Rock C.O."/>
        </authorList>
    </citation>
    <scope>INDUCTION</scope>
</reference>
<reference key="11">
    <citation type="journal article" date="2009" name="J. Biol. Chem.">
        <title>Escherichia coli unsaturated fatty acid synthesis: complex transcription of the fabA gene and in vivo identification of the essential reaction catalyzed by FabB.</title>
        <authorList>
            <person name="Feng Y."/>
            <person name="Cronan J.E."/>
        </authorList>
    </citation>
    <scope>FUNCTION</scope>
    <scope>CATALYTIC ACTIVITY</scope>
    <scope>PATHWAY</scope>
</reference>
<reference key="12">
    <citation type="journal article" date="2011" name="Mol. Microbiol.">
        <title>Complex binding of the FabR repressor of bacterial unsaturated fatty acid biosynthesis to its cognate promoters.</title>
        <authorList>
            <person name="Feng Y."/>
            <person name="Cronan J.E."/>
        </authorList>
    </citation>
    <scope>INDUCTION</scope>
</reference>
<reference key="13">
    <citation type="journal article" date="2011" name="Biochemistry">
        <title>Substrate recognition by beta-ketoacyl-ACP synthases.</title>
        <authorList>
            <person name="Borgaro J.G."/>
            <person name="Chang A."/>
            <person name="Machutta C.A."/>
            <person name="Zhang X."/>
            <person name="Tonge P.J."/>
        </authorList>
    </citation>
    <scope>FUNCTION</scope>
    <scope>CATALYTIC ACTIVITY</scope>
    <scope>BIOPHYSICOCHEMICAL PROPERTIES</scope>
</reference>
<reference key="14">
    <citation type="journal article" date="1999" name="FEBS Lett.">
        <title>The X-ray crystal structure of beta-ketoacyl [acyl carrier-protein] synthase I.</title>
        <authorList>
            <person name="Olsen J.G."/>
            <person name="Kadziola A."/>
            <person name="von Wettstein-Knowles P."/>
            <person name="Siggaard-Andersen M."/>
            <person name="Lindquist Y."/>
            <person name="Larsen S."/>
        </authorList>
    </citation>
    <scope>X-RAY CRYSTALLOGRAPHY (2.3 ANGSTROMS)</scope>
    <scope>SUBUNIT</scope>
    <scope>ACTIVE SITE</scope>
</reference>
<dbReference type="EC" id="2.3.1.41" evidence="4 6 8 9"/>
<dbReference type="EMBL" id="M24427">
    <property type="protein sequence ID" value="AAC67304.1"/>
    <property type="molecule type" value="Genomic_DNA"/>
</dbReference>
<dbReference type="EMBL" id="AJ012161">
    <property type="protein sequence ID" value="CAA09932.1"/>
    <property type="molecule type" value="Genomic_DNA"/>
</dbReference>
<dbReference type="EMBL" id="AJ012162">
    <property type="protein sequence ID" value="CAA09933.1"/>
    <property type="molecule type" value="Genomic_DNA"/>
</dbReference>
<dbReference type="EMBL" id="AJ012163">
    <property type="protein sequence ID" value="CAA09934.1"/>
    <property type="molecule type" value="Genomic_DNA"/>
</dbReference>
<dbReference type="EMBL" id="U00096">
    <property type="protein sequence ID" value="AAC75383.1"/>
    <property type="molecule type" value="Genomic_DNA"/>
</dbReference>
<dbReference type="EMBL" id="AP009048">
    <property type="protein sequence ID" value="BAA16180.1"/>
    <property type="molecule type" value="Genomic_DNA"/>
</dbReference>
<dbReference type="PIR" id="A31284">
    <property type="entry name" value="SYECA1"/>
</dbReference>
<dbReference type="RefSeq" id="NP_416826.1">
    <property type="nucleotide sequence ID" value="NC_000913.3"/>
</dbReference>
<dbReference type="RefSeq" id="WP_000817178.1">
    <property type="nucleotide sequence ID" value="NZ_SSZK01000006.1"/>
</dbReference>
<dbReference type="PDB" id="1DD8">
    <property type="method" value="X-ray"/>
    <property type="resolution" value="2.30 A"/>
    <property type="chains" value="A/B/C/D=1-406"/>
</dbReference>
<dbReference type="PDB" id="1EK4">
    <property type="method" value="X-ray"/>
    <property type="resolution" value="1.85 A"/>
    <property type="chains" value="A/B/C/D=1-406"/>
</dbReference>
<dbReference type="PDB" id="1F91">
    <property type="method" value="X-ray"/>
    <property type="resolution" value="2.40 A"/>
    <property type="chains" value="A/B/C/D=1-406"/>
</dbReference>
<dbReference type="PDB" id="1FJ4">
    <property type="method" value="X-ray"/>
    <property type="resolution" value="2.35 A"/>
    <property type="chains" value="A/B/C/D=1-406"/>
</dbReference>
<dbReference type="PDB" id="1FJ8">
    <property type="method" value="X-ray"/>
    <property type="resolution" value="2.27 A"/>
    <property type="chains" value="A/B/C/D=1-406"/>
</dbReference>
<dbReference type="PDB" id="1G5X">
    <property type="method" value="X-ray"/>
    <property type="resolution" value="2.45 A"/>
    <property type="chains" value="A/B/C/D=1-406"/>
</dbReference>
<dbReference type="PDB" id="1H4F">
    <property type="method" value="X-ray"/>
    <property type="resolution" value="2.00 A"/>
    <property type="chains" value="A/B/C/D=1-406"/>
</dbReference>
<dbReference type="PDB" id="2AQ7">
    <property type="method" value="X-ray"/>
    <property type="resolution" value="2.30 A"/>
    <property type="chains" value="A/B/C/D=1-406"/>
</dbReference>
<dbReference type="PDB" id="2AQB">
    <property type="method" value="X-ray"/>
    <property type="resolution" value="2.19 A"/>
    <property type="chains" value="A/B/C/D=1-406"/>
</dbReference>
<dbReference type="PDB" id="2BUH">
    <property type="method" value="X-ray"/>
    <property type="resolution" value="1.90 A"/>
    <property type="chains" value="A/B/C/D=1-406"/>
</dbReference>
<dbReference type="PDB" id="2BUI">
    <property type="method" value="X-ray"/>
    <property type="resolution" value="2.40 A"/>
    <property type="chains" value="A/B/C/D=1-406"/>
</dbReference>
<dbReference type="PDB" id="2BYW">
    <property type="method" value="X-ray"/>
    <property type="resolution" value="1.70 A"/>
    <property type="chains" value="A/B/C/D=1-406"/>
</dbReference>
<dbReference type="PDB" id="2BYX">
    <property type="method" value="X-ray"/>
    <property type="resolution" value="2.00 A"/>
    <property type="chains" value="A/B/C/D=1-406"/>
</dbReference>
<dbReference type="PDB" id="2BYY">
    <property type="method" value="X-ray"/>
    <property type="resolution" value="2.20 A"/>
    <property type="chains" value="A/B/C/D=1-406"/>
</dbReference>
<dbReference type="PDB" id="2BYZ">
    <property type="method" value="X-ray"/>
    <property type="resolution" value="1.95 A"/>
    <property type="chains" value="A/B/C/D=1-406"/>
</dbReference>
<dbReference type="PDB" id="2BZ3">
    <property type="method" value="X-ray"/>
    <property type="resolution" value="2.00 A"/>
    <property type="chains" value="A/B/C/D=1-406"/>
</dbReference>
<dbReference type="PDB" id="2BZ4">
    <property type="method" value="X-ray"/>
    <property type="resolution" value="1.86 A"/>
    <property type="chains" value="A/B/C/D=1-406"/>
</dbReference>
<dbReference type="PDB" id="2CDH">
    <property type="method" value="X-ray"/>
    <property type="resolution" value="4.20 A"/>
    <property type="chains" value="A/B/C/D/E/F=1-406"/>
</dbReference>
<dbReference type="PDB" id="2CF2">
    <property type="method" value="X-ray"/>
    <property type="resolution" value="4.30 A"/>
    <property type="chains" value="A/J=1-406"/>
</dbReference>
<dbReference type="PDB" id="2VB7">
    <property type="method" value="X-ray"/>
    <property type="resolution" value="1.60 A"/>
    <property type="chains" value="A/B/C/D=1-406"/>
</dbReference>
<dbReference type="PDB" id="2VB8">
    <property type="method" value="X-ray"/>
    <property type="resolution" value="1.52 A"/>
    <property type="chains" value="A/B/C/D=1-406"/>
</dbReference>
<dbReference type="PDB" id="2VB9">
    <property type="method" value="X-ray"/>
    <property type="resolution" value="1.50 A"/>
    <property type="chains" value="A/B/C/D=1-406"/>
</dbReference>
<dbReference type="PDB" id="2VBA">
    <property type="method" value="X-ray"/>
    <property type="resolution" value="1.36 A"/>
    <property type="chains" value="A/B/C/D=1-406"/>
</dbReference>
<dbReference type="PDB" id="5KOF">
    <property type="method" value="X-ray"/>
    <property type="resolution" value="2.40 A"/>
    <property type="chains" value="A/B=1-406"/>
</dbReference>
<dbReference type="PDB" id="6OKC">
    <property type="method" value="X-ray"/>
    <property type="resolution" value="1.55 A"/>
    <property type="chains" value="A/B=1-406"/>
</dbReference>
<dbReference type="PDB" id="6OKF">
    <property type="method" value="X-ray"/>
    <property type="resolution" value="2.50 A"/>
    <property type="chains" value="A/B=1-406"/>
</dbReference>
<dbReference type="PDB" id="7SQI">
    <property type="method" value="X-ray"/>
    <property type="resolution" value="1.70 A"/>
    <property type="chains" value="A/B=1-405"/>
</dbReference>
<dbReference type="PDB" id="7SZ9">
    <property type="method" value="X-ray"/>
    <property type="resolution" value="2.20 A"/>
    <property type="chains" value="A/B=2-405"/>
</dbReference>
<dbReference type="PDB" id="8SMS">
    <property type="method" value="X-ray"/>
    <property type="resolution" value="1.93 A"/>
    <property type="chains" value="A/B=2-405"/>
</dbReference>
<dbReference type="PDBsum" id="1DD8"/>
<dbReference type="PDBsum" id="1EK4"/>
<dbReference type="PDBsum" id="1F91"/>
<dbReference type="PDBsum" id="1FJ4"/>
<dbReference type="PDBsum" id="1FJ8"/>
<dbReference type="PDBsum" id="1G5X"/>
<dbReference type="PDBsum" id="1H4F"/>
<dbReference type="PDBsum" id="2AQ7"/>
<dbReference type="PDBsum" id="2AQB"/>
<dbReference type="PDBsum" id="2BUH"/>
<dbReference type="PDBsum" id="2BUI"/>
<dbReference type="PDBsum" id="2BYW"/>
<dbReference type="PDBsum" id="2BYX"/>
<dbReference type="PDBsum" id="2BYY"/>
<dbReference type="PDBsum" id="2BYZ"/>
<dbReference type="PDBsum" id="2BZ3"/>
<dbReference type="PDBsum" id="2BZ4"/>
<dbReference type="PDBsum" id="2CDH"/>
<dbReference type="PDBsum" id="2CF2"/>
<dbReference type="PDBsum" id="2VB7"/>
<dbReference type="PDBsum" id="2VB8"/>
<dbReference type="PDBsum" id="2VB9"/>
<dbReference type="PDBsum" id="2VBA"/>
<dbReference type="PDBsum" id="5KOF"/>
<dbReference type="PDBsum" id="6OKC"/>
<dbReference type="PDBsum" id="6OKF"/>
<dbReference type="PDBsum" id="7SQI"/>
<dbReference type="PDBsum" id="7SZ9"/>
<dbReference type="PDBsum" id="8SMS"/>
<dbReference type="SMR" id="P0A953"/>
<dbReference type="BioGRID" id="4260793">
    <property type="interactions" value="232"/>
</dbReference>
<dbReference type="DIP" id="DIP-29379N"/>
<dbReference type="FunCoup" id="P0A953">
    <property type="interactions" value="257"/>
</dbReference>
<dbReference type="IntAct" id="P0A953">
    <property type="interactions" value="9"/>
</dbReference>
<dbReference type="STRING" id="511145.b2323"/>
<dbReference type="BindingDB" id="P0A953"/>
<dbReference type="ChEMBL" id="CHEMBL4913"/>
<dbReference type="DrugBank" id="DB08627">
    <property type="generic name" value="(5R)-4-HYDROXY-3,5-DIMETHYL-5-[(1E,3E)-2-METHYLPENTA-1,3-DIENYL]THIOPHEN-2(5H)-ONE"/>
</dbReference>
<dbReference type="DrugBank" id="DB08628">
    <property type="generic name" value="(5R)-5-[(1E)-BUTA-1,3-DIENYL]-4-HYDROXY-3,5-DIMETHYLTHIOPHEN-2(5H)-ONE"/>
</dbReference>
<dbReference type="DrugBank" id="DB08359">
    <property type="generic name" value="2-PHENYLAMINO-4-METHYL-5-ACETYL THIAZOLE"/>
</dbReference>
<dbReference type="DrugBank" id="DB04302">
    <property type="generic name" value="4-Hydroxy-3,5-Dimethyl-5-(2-Methyl-Buta-1,3-Dienyl)-5h-Thiophen-2-One"/>
</dbReference>
<dbReference type="DrugBank" id="DB03600">
    <property type="generic name" value="Capric acid"/>
</dbReference>
<dbReference type="DrugBank" id="DB04519">
    <property type="generic name" value="Caprylic acid"/>
</dbReference>
<dbReference type="DrugBank" id="DB01034">
    <property type="generic name" value="Cerulenin"/>
</dbReference>
<dbReference type="DrugBank" id="DB03017">
    <property type="generic name" value="Lauric acid"/>
</dbReference>
<dbReference type="SwissLipids" id="SLP:000001786"/>
<dbReference type="jPOST" id="P0A953"/>
<dbReference type="PaxDb" id="511145-b2323"/>
<dbReference type="EnsemblBacteria" id="AAC75383">
    <property type="protein sequence ID" value="AAC75383"/>
    <property type="gene ID" value="b2323"/>
</dbReference>
<dbReference type="GeneID" id="75202594"/>
<dbReference type="GeneID" id="946799"/>
<dbReference type="KEGG" id="ecj:JW2320"/>
<dbReference type="KEGG" id="eco:b2323"/>
<dbReference type="KEGG" id="ecoc:C3026_12945"/>
<dbReference type="PATRIC" id="fig|1411691.4.peg.4409"/>
<dbReference type="EchoBASE" id="EB0270"/>
<dbReference type="eggNOG" id="COG0304">
    <property type="taxonomic scope" value="Bacteria"/>
</dbReference>
<dbReference type="HOGENOM" id="CLU_000022_69_2_6"/>
<dbReference type="InParanoid" id="P0A953"/>
<dbReference type="OMA" id="WMAGASE"/>
<dbReference type="OrthoDB" id="9808669at2"/>
<dbReference type="PhylomeDB" id="P0A953"/>
<dbReference type="BioCyc" id="EcoCyc:FABB-MONOMER"/>
<dbReference type="BioCyc" id="MetaCyc:FABB-MONOMER"/>
<dbReference type="BRENDA" id="2.3.1.41">
    <property type="organism ID" value="2026"/>
</dbReference>
<dbReference type="UniPathway" id="UPA00094"/>
<dbReference type="EvolutionaryTrace" id="P0A953"/>
<dbReference type="PRO" id="PR:P0A953"/>
<dbReference type="Proteomes" id="UP000000625">
    <property type="component" value="Chromosome"/>
</dbReference>
<dbReference type="GO" id="GO:0005829">
    <property type="term" value="C:cytosol"/>
    <property type="evidence" value="ECO:0000314"/>
    <property type="project" value="EcoCyc"/>
</dbReference>
<dbReference type="GO" id="GO:0004315">
    <property type="term" value="F:3-oxoacyl-[acyl-carrier-protein] synthase activity"/>
    <property type="evidence" value="ECO:0000314"/>
    <property type="project" value="EcoCyc"/>
</dbReference>
<dbReference type="GO" id="GO:0006633">
    <property type="term" value="P:fatty acid biosynthetic process"/>
    <property type="evidence" value="ECO:0000315"/>
    <property type="project" value="EcoCyc"/>
</dbReference>
<dbReference type="GO" id="GO:1903966">
    <property type="term" value="P:monounsaturated fatty acid biosynthetic process"/>
    <property type="evidence" value="ECO:0000315"/>
    <property type="project" value="EcoCyc"/>
</dbReference>
<dbReference type="CDD" id="cd00834">
    <property type="entry name" value="KAS_I_II"/>
    <property type="match status" value="1"/>
</dbReference>
<dbReference type="FunFam" id="3.40.47.10:FF:000005">
    <property type="entry name" value="3-oxoacyl-[acyl-carrier-protein] synthase I"/>
    <property type="match status" value="1"/>
</dbReference>
<dbReference type="FunFam" id="3.40.47.10:FF:000006">
    <property type="entry name" value="3-oxoacyl-[acyl-carrier-protein] synthase I"/>
    <property type="match status" value="1"/>
</dbReference>
<dbReference type="Gene3D" id="3.40.47.10">
    <property type="match status" value="2"/>
</dbReference>
<dbReference type="InterPro" id="IPR000794">
    <property type="entry name" value="Beta-ketoacyl_synthase"/>
</dbReference>
<dbReference type="InterPro" id="IPR018201">
    <property type="entry name" value="Ketoacyl_synth_AS"/>
</dbReference>
<dbReference type="InterPro" id="IPR014031">
    <property type="entry name" value="Ketoacyl_synth_C"/>
</dbReference>
<dbReference type="InterPro" id="IPR014030">
    <property type="entry name" value="Ketoacyl_synth_N"/>
</dbReference>
<dbReference type="InterPro" id="IPR020841">
    <property type="entry name" value="PKS_Beta-ketoAc_synthase_dom"/>
</dbReference>
<dbReference type="InterPro" id="IPR016039">
    <property type="entry name" value="Thiolase-like"/>
</dbReference>
<dbReference type="NCBIfam" id="NF005935">
    <property type="entry name" value="PRK07967.1"/>
    <property type="match status" value="1"/>
</dbReference>
<dbReference type="PANTHER" id="PTHR11712:SF306">
    <property type="entry name" value="3-OXOACYL-[ACYL-CARRIER-PROTEIN] SYNTHASE 1"/>
    <property type="match status" value="1"/>
</dbReference>
<dbReference type="PANTHER" id="PTHR11712">
    <property type="entry name" value="POLYKETIDE SYNTHASE-RELATED"/>
    <property type="match status" value="1"/>
</dbReference>
<dbReference type="Pfam" id="PF00109">
    <property type="entry name" value="ketoacyl-synt"/>
    <property type="match status" value="1"/>
</dbReference>
<dbReference type="Pfam" id="PF02801">
    <property type="entry name" value="Ketoacyl-synt_C"/>
    <property type="match status" value="1"/>
</dbReference>
<dbReference type="SMART" id="SM00825">
    <property type="entry name" value="PKS_KS"/>
    <property type="match status" value="1"/>
</dbReference>
<dbReference type="SUPFAM" id="SSF53901">
    <property type="entry name" value="Thiolase-like"/>
    <property type="match status" value="2"/>
</dbReference>
<dbReference type="PROSITE" id="PS00606">
    <property type="entry name" value="KS3_1"/>
    <property type="match status" value="1"/>
</dbReference>
<dbReference type="PROSITE" id="PS52004">
    <property type="entry name" value="KS3_2"/>
    <property type="match status" value="1"/>
</dbReference>
<evidence type="ECO:0000255" key="1">
    <source>
        <dbReference type="PROSITE-ProRule" id="PRU01348"/>
    </source>
</evidence>
<evidence type="ECO:0000269" key="2">
    <source>
    </source>
</evidence>
<evidence type="ECO:0000269" key="3">
    <source>
    </source>
</evidence>
<evidence type="ECO:0000269" key="4">
    <source>
    </source>
</evidence>
<evidence type="ECO:0000269" key="5">
    <source>
    </source>
</evidence>
<evidence type="ECO:0000269" key="6">
    <source>
    </source>
</evidence>
<evidence type="ECO:0000269" key="7">
    <source>
    </source>
</evidence>
<evidence type="ECO:0000269" key="8">
    <source>
    </source>
</evidence>
<evidence type="ECO:0000269" key="9">
    <source>
    </source>
</evidence>
<evidence type="ECO:0000303" key="10">
    <source>
    </source>
</evidence>
<evidence type="ECO:0000305" key="11"/>
<evidence type="ECO:0000305" key="12">
    <source>
    </source>
</evidence>
<evidence type="ECO:0000305" key="13">
    <source>
    </source>
</evidence>
<evidence type="ECO:0000305" key="14">
    <source>
    </source>
</evidence>
<evidence type="ECO:0007829" key="15">
    <source>
        <dbReference type="PDB" id="2AQ7"/>
    </source>
</evidence>
<evidence type="ECO:0007829" key="16">
    <source>
        <dbReference type="PDB" id="2BUH"/>
    </source>
</evidence>
<evidence type="ECO:0007829" key="17">
    <source>
        <dbReference type="PDB" id="2VB7"/>
    </source>
</evidence>
<evidence type="ECO:0007829" key="18">
    <source>
        <dbReference type="PDB" id="2VB9"/>
    </source>
</evidence>
<evidence type="ECO:0007829" key="19">
    <source>
        <dbReference type="PDB" id="2VBA"/>
    </source>
</evidence>
<keyword id="KW-0002">3D-structure</keyword>
<keyword id="KW-0012">Acyltransferase</keyword>
<keyword id="KW-0963">Cytoplasm</keyword>
<keyword id="KW-0903">Direct protein sequencing</keyword>
<keyword id="KW-0275">Fatty acid biosynthesis</keyword>
<keyword id="KW-0276">Fatty acid metabolism</keyword>
<keyword id="KW-0444">Lipid biosynthesis</keyword>
<keyword id="KW-0443">Lipid metabolism</keyword>
<keyword id="KW-1185">Reference proteome</keyword>
<keyword id="KW-0808">Transferase</keyword>